<dbReference type="EMBL" id="AY429481">
    <property type="protein sequence ID" value="AAR06855.1"/>
    <property type="molecule type" value="mRNA"/>
</dbReference>
<dbReference type="SMR" id="P83906"/>
<dbReference type="GO" id="GO:0005615">
    <property type="term" value="C:extracellular space"/>
    <property type="evidence" value="ECO:0007669"/>
    <property type="project" value="TreeGrafter"/>
</dbReference>
<dbReference type="GO" id="GO:0016020">
    <property type="term" value="C:membrane"/>
    <property type="evidence" value="ECO:0007669"/>
    <property type="project" value="InterPro"/>
</dbReference>
<dbReference type="GO" id="GO:0042056">
    <property type="term" value="F:chemoattractant activity"/>
    <property type="evidence" value="ECO:0007669"/>
    <property type="project" value="TreeGrafter"/>
</dbReference>
<dbReference type="GO" id="GO:0008083">
    <property type="term" value="F:growth factor activity"/>
    <property type="evidence" value="ECO:0007669"/>
    <property type="project" value="UniProtKB-KW"/>
</dbReference>
<dbReference type="GO" id="GO:0008201">
    <property type="term" value="F:heparin binding"/>
    <property type="evidence" value="ECO:0007669"/>
    <property type="project" value="UniProtKB-KW"/>
</dbReference>
<dbReference type="GO" id="GO:0005172">
    <property type="term" value="F:vascular endothelial growth factor receptor binding"/>
    <property type="evidence" value="ECO:0007669"/>
    <property type="project" value="TreeGrafter"/>
</dbReference>
<dbReference type="GO" id="GO:0030154">
    <property type="term" value="P:cell differentiation"/>
    <property type="evidence" value="ECO:0007669"/>
    <property type="project" value="UniProtKB-KW"/>
</dbReference>
<dbReference type="GO" id="GO:0050930">
    <property type="term" value="P:induction of positive chemotaxis"/>
    <property type="evidence" value="ECO:0007669"/>
    <property type="project" value="TreeGrafter"/>
</dbReference>
<dbReference type="GO" id="GO:0045766">
    <property type="term" value="P:positive regulation of angiogenesis"/>
    <property type="evidence" value="ECO:0007669"/>
    <property type="project" value="TreeGrafter"/>
</dbReference>
<dbReference type="GO" id="GO:0051781">
    <property type="term" value="P:positive regulation of cell division"/>
    <property type="evidence" value="ECO:0007669"/>
    <property type="project" value="UniProtKB-KW"/>
</dbReference>
<dbReference type="GO" id="GO:0001938">
    <property type="term" value="P:positive regulation of endothelial cell proliferation"/>
    <property type="evidence" value="ECO:0000250"/>
    <property type="project" value="UniProtKB"/>
</dbReference>
<dbReference type="GO" id="GO:0051894">
    <property type="term" value="P:positive regulation of focal adhesion assembly"/>
    <property type="evidence" value="ECO:0000250"/>
    <property type="project" value="UniProtKB"/>
</dbReference>
<dbReference type="GO" id="GO:0060754">
    <property type="term" value="P:positive regulation of mast cell chemotaxis"/>
    <property type="evidence" value="ECO:0007669"/>
    <property type="project" value="TreeGrafter"/>
</dbReference>
<dbReference type="GO" id="GO:0050731">
    <property type="term" value="P:positive regulation of peptidyl-tyrosine phosphorylation"/>
    <property type="evidence" value="ECO:0000250"/>
    <property type="project" value="UniProtKB"/>
</dbReference>
<dbReference type="GO" id="GO:0031334">
    <property type="term" value="P:positive regulation of protein-containing complex assembly"/>
    <property type="evidence" value="ECO:0000250"/>
    <property type="project" value="UniProtKB"/>
</dbReference>
<dbReference type="GO" id="GO:0001666">
    <property type="term" value="P:response to hypoxia"/>
    <property type="evidence" value="ECO:0007669"/>
    <property type="project" value="TreeGrafter"/>
</dbReference>
<dbReference type="GO" id="GO:0002040">
    <property type="term" value="P:sprouting angiogenesis"/>
    <property type="evidence" value="ECO:0007669"/>
    <property type="project" value="TreeGrafter"/>
</dbReference>
<dbReference type="GO" id="GO:0048010">
    <property type="term" value="P:vascular endothelial growth factor receptor signaling pathway"/>
    <property type="evidence" value="ECO:0007669"/>
    <property type="project" value="TreeGrafter"/>
</dbReference>
<dbReference type="GO" id="GO:0038084">
    <property type="term" value="P:vascular endothelial growth factor signaling pathway"/>
    <property type="evidence" value="ECO:0007669"/>
    <property type="project" value="TreeGrafter"/>
</dbReference>
<dbReference type="CDD" id="cd00135">
    <property type="entry name" value="PDGF"/>
    <property type="match status" value="1"/>
</dbReference>
<dbReference type="FunFam" id="2.10.160.10:FF:000001">
    <property type="entry name" value="Vascular endothelial growth factor A"/>
    <property type="match status" value="1"/>
</dbReference>
<dbReference type="FunFam" id="2.10.90.10:FF:000009">
    <property type="entry name" value="Vascular endothelial growth factor A"/>
    <property type="match status" value="1"/>
</dbReference>
<dbReference type="Gene3D" id="2.10.90.10">
    <property type="entry name" value="Cystine-knot cytokines"/>
    <property type="match status" value="1"/>
</dbReference>
<dbReference type="Gene3D" id="2.10.160.10">
    <property type="entry name" value="Vascular endothelial growth factor, heparin-binding domain"/>
    <property type="match status" value="1"/>
</dbReference>
<dbReference type="InterPro" id="IPR029034">
    <property type="entry name" value="Cystine-knot_cytokine"/>
</dbReference>
<dbReference type="InterPro" id="IPR023581">
    <property type="entry name" value="PD_growth_factor_CS"/>
</dbReference>
<dbReference type="InterPro" id="IPR000072">
    <property type="entry name" value="PDGF/VEGF_dom"/>
</dbReference>
<dbReference type="InterPro" id="IPR050507">
    <property type="entry name" value="PDGF/VEGF_growth_factor"/>
</dbReference>
<dbReference type="InterPro" id="IPR027928">
    <property type="entry name" value="VEGF_C"/>
</dbReference>
<dbReference type="InterPro" id="IPR036841">
    <property type="entry name" value="VEGF_C_sf"/>
</dbReference>
<dbReference type="PANTHER" id="PTHR12025">
    <property type="entry name" value="VASCULAR ENDOTHELIAL GROWTH FACTOR"/>
    <property type="match status" value="1"/>
</dbReference>
<dbReference type="PANTHER" id="PTHR12025:SF5">
    <property type="entry name" value="VASCULAR ENDOTHELIAL GROWTH FACTOR A, LONG FORM"/>
    <property type="match status" value="1"/>
</dbReference>
<dbReference type="Pfam" id="PF00341">
    <property type="entry name" value="PDGF"/>
    <property type="match status" value="1"/>
</dbReference>
<dbReference type="Pfam" id="PF14554">
    <property type="entry name" value="VEGF_C"/>
    <property type="match status" value="1"/>
</dbReference>
<dbReference type="SMART" id="SM00141">
    <property type="entry name" value="PDGF"/>
    <property type="match status" value="1"/>
</dbReference>
<dbReference type="SUPFAM" id="SSF57501">
    <property type="entry name" value="Cystine-knot cytokines"/>
    <property type="match status" value="1"/>
</dbReference>
<dbReference type="SUPFAM" id="SSF57593">
    <property type="entry name" value="Heparin-binding domain from vascular endothelial growth factor"/>
    <property type="match status" value="1"/>
</dbReference>
<dbReference type="PROSITE" id="PS00249">
    <property type="entry name" value="PDGF_1"/>
    <property type="match status" value="1"/>
</dbReference>
<dbReference type="PROSITE" id="PS50278">
    <property type="entry name" value="PDGF_2"/>
    <property type="match status" value="1"/>
</dbReference>
<keyword id="KW-0037">Angiogenesis</keyword>
<keyword id="KW-0217">Developmental protein</keyword>
<keyword id="KW-0221">Differentiation</keyword>
<keyword id="KW-0903">Direct protein sequencing</keyword>
<keyword id="KW-1015">Disulfide bond</keyword>
<keyword id="KW-0325">Glycoprotein</keyword>
<keyword id="KW-0339">Growth factor</keyword>
<keyword id="KW-0358">Heparin-binding</keyword>
<keyword id="KW-0497">Mitogen</keyword>
<keyword id="KW-0964">Secreted</keyword>
<keyword id="KW-0732">Signal</keyword>
<accession>P83906</accession>
<comment type="function">
    <text evidence="1">Growth factor active in angiogenesis, vasculogenesis and endothelial cell growth. Induces endothelial cell proliferation, promotes cell migration, inhibits apoptosis and induces permeabilization of blood vessels. Binds to heparan sulfate and heparin.</text>
</comment>
<comment type="subunit">
    <text evidence="1">Homodimer; disulfide-linked. Also found as heterodimer with PGF.</text>
</comment>
<comment type="subcellular location">
    <subcellularLocation>
        <location evidence="4">Secreted</location>
    </subcellularLocation>
</comment>
<comment type="tissue specificity">
    <text evidence="6">Expressed by the venom gland, and probably other tissues.</text>
</comment>
<comment type="similarity">
    <text evidence="6">Belongs to the PDGF/VEGF growth factor family.</text>
</comment>
<name>VEGFA_BITGA</name>
<protein>
    <recommendedName>
        <fullName evidence="5">Vascular endothelial growth factor A</fullName>
        <shortName evidence="5">VEGF-A</shortName>
    </recommendedName>
    <alternativeName>
        <fullName evidence="5">Vascular permeability factor</fullName>
        <shortName evidence="5">VPF</shortName>
    </alternativeName>
</protein>
<reference key="1">
    <citation type="journal article" date="2004" name="Gene">
        <title>Bitis gabonica (Gaboon viper) snake venom gland: toward a catalog for the full-length transcripts (cDNA) and proteins.</title>
        <authorList>
            <person name="Francischetti I.M.B."/>
            <person name="My-Pham V."/>
            <person name="Harrison J."/>
            <person name="Garfield M.K."/>
            <person name="Ribeiro J.M.C."/>
        </authorList>
    </citation>
    <scope>NUCLEOTIDE SEQUENCE [LARGE SCALE MRNA]</scope>
    <source>
        <tissue>Venom gland</tissue>
    </source>
</reference>
<reference key="2">
    <citation type="journal article" date="2007" name="J. Proteome Res.">
        <title>Snake venomics of Bitis gabonica gabonica. Protein family composition, subunit organization of venom toxins, and characterization of dimeric disintegrins bitisgabonin-1 and bitisgabonin-2.</title>
        <authorList>
            <person name="Calvete J.J."/>
            <person name="Marcinkiewicz C."/>
            <person name="Sanz L."/>
        </authorList>
    </citation>
    <scope>PROTEIN SEQUENCE OF 36-45; 109-127 AND 138-149</scope>
    <scope>SUBCELLULAR LOCATION</scope>
    <scope>IDENTIFICATION BY MASS SPECTROMETRY</scope>
    <source>
        <tissue>Venom</tissue>
    </source>
</reference>
<sequence>MNFLLTWIHWGLAALLYFHNAKVLQAAPAQGDGERQQGEVIPFLKVYERSICRPVETMVDIFQEYPDEVEYIFKPSCVALMRCGGCCNDEALECVPTEMYNVTMEVMKLKPFQSQHIHPVSFQQHSKCECRPKKDIRNKDNHCEPCSERRKHLYKQDPLTCKCSCKAPDLRCKSKQLELNERTCRCERPRR</sequence>
<evidence type="ECO:0000250" key="1"/>
<evidence type="ECO:0000250" key="2">
    <source>
        <dbReference type="UniProtKB" id="P15692"/>
    </source>
</evidence>
<evidence type="ECO:0000255" key="3"/>
<evidence type="ECO:0000269" key="4">
    <source>
    </source>
</evidence>
<evidence type="ECO:0000303" key="5">
    <source>
    </source>
</evidence>
<evidence type="ECO:0000305" key="6"/>
<organism>
    <name type="scientific">Bitis gabonica</name>
    <name type="common">Gaboon adder</name>
    <name type="synonym">Gaboon viper</name>
    <dbReference type="NCBI Taxonomy" id="8694"/>
    <lineage>
        <taxon>Eukaryota</taxon>
        <taxon>Metazoa</taxon>
        <taxon>Chordata</taxon>
        <taxon>Craniata</taxon>
        <taxon>Vertebrata</taxon>
        <taxon>Euteleostomi</taxon>
        <taxon>Lepidosauria</taxon>
        <taxon>Squamata</taxon>
        <taxon>Bifurcata</taxon>
        <taxon>Unidentata</taxon>
        <taxon>Episquamata</taxon>
        <taxon>Toxicofera</taxon>
        <taxon>Serpentes</taxon>
        <taxon>Colubroidea</taxon>
        <taxon>Viperidae</taxon>
        <taxon>Viperinae</taxon>
        <taxon>Bitis</taxon>
    </lineage>
</organism>
<feature type="signal peptide" evidence="3">
    <location>
        <begin position="1"/>
        <end position="26"/>
    </location>
</feature>
<feature type="chain" id="PRO_0000023395" description="Vascular endothelial growth factor A" evidence="3">
    <location>
        <begin position="27"/>
        <end position="191"/>
    </location>
</feature>
<feature type="glycosylation site" description="N-linked (GlcNAc...) asparagine" evidence="6">
    <location>
        <position position="101"/>
    </location>
</feature>
<feature type="disulfide bond" evidence="2">
    <location>
        <begin position="52"/>
        <end position="94"/>
    </location>
</feature>
<feature type="disulfide bond" description="Interchain" evidence="2">
    <location>
        <position position="77"/>
    </location>
</feature>
<feature type="disulfide bond" evidence="2">
    <location>
        <begin position="83"/>
        <end position="128"/>
    </location>
</feature>
<feature type="disulfide bond" description="Interchain" evidence="2">
    <location>
        <position position="86"/>
    </location>
</feature>
<feature type="disulfide bond" evidence="2">
    <location>
        <begin position="87"/>
        <end position="130"/>
    </location>
</feature>
<proteinExistence type="evidence at protein level"/>